<feature type="signal peptide" evidence="1">
    <location>
        <begin position="1"/>
        <end position="22"/>
    </location>
</feature>
<feature type="propeptide" id="PRO_0000006871" evidence="1 3">
    <location>
        <begin position="23"/>
        <end position="64"/>
    </location>
</feature>
<feature type="peptide" id="PRO_0000006872" description="Rhesus theta defensin-1/3 subunit A">
    <location>
        <begin position="65"/>
        <end position="73"/>
    </location>
</feature>
<feature type="propeptide" id="PRO_0000006873" evidence="3">
    <location>
        <begin position="74"/>
        <end position="76"/>
    </location>
</feature>
<feature type="region of interest" description="Disordered" evidence="2">
    <location>
        <begin position="25"/>
        <end position="45"/>
    </location>
</feature>
<feature type="disulfide bond" description="Interchain (with C-66 in subunit A); in form RTD-3" evidence="3 6">
    <location>
        <position position="66"/>
    </location>
</feature>
<feature type="disulfide bond" description="Interchain (with C-66 in subunit B); in form RTD-1" evidence="3">
    <location>
        <position position="66"/>
    </location>
</feature>
<feature type="disulfide bond" evidence="3 6">
    <location>
        <begin position="68"/>
        <end position="73"/>
    </location>
</feature>
<feature type="cross-link" description="Cyclopeptide (Arg-Cys) (interchain with C-73 in subunit A); in form RTD-3">
    <location>
        <position position="65"/>
    </location>
</feature>
<feature type="cross-link" description="Cyclopeptide (Arg-Cys) (interchain with C-73 in subunit B); in form RTD-1">
    <location>
        <position position="65"/>
    </location>
</feature>
<feature type="cross-link" description="Cyclopeptide (Cys-Arg) (interchain with R-65 in subunit A); in form RTD-3">
    <location>
        <position position="73"/>
    </location>
</feature>
<feature type="cross-link" description="Cyclopeptide (Cys-Arg) (interchain with R-65 in subunit B); in form RTD-1">
    <location>
        <position position="73"/>
    </location>
</feature>
<feature type="sequence conflict" description="In Ref. 2; AAF07924." evidence="7" ref="2">
    <original>T</original>
    <variation>A</variation>
    <location>
        <position position="38"/>
    </location>
</feature>
<feature type="sequence conflict" description="In Ref. 2; published sequence." evidence="7" ref="2">
    <original>W</original>
    <variation>R</variation>
    <location>
        <position position="49"/>
    </location>
</feature>
<organism>
    <name type="scientific">Macaca mulatta</name>
    <name type="common">Rhesus macaque</name>
    <dbReference type="NCBI Taxonomy" id="9544"/>
    <lineage>
        <taxon>Eukaryota</taxon>
        <taxon>Metazoa</taxon>
        <taxon>Chordata</taxon>
        <taxon>Craniata</taxon>
        <taxon>Vertebrata</taxon>
        <taxon>Euteleostomi</taxon>
        <taxon>Mammalia</taxon>
        <taxon>Eutheria</taxon>
        <taxon>Euarchontoglires</taxon>
        <taxon>Primates</taxon>
        <taxon>Haplorrhini</taxon>
        <taxon>Catarrhini</taxon>
        <taxon>Cercopithecidae</taxon>
        <taxon>Cercopithecinae</taxon>
        <taxon>Macaca</taxon>
    </lineage>
</organism>
<comment type="function">
    <text evidence="5">RTD-1 and RTD-3 have similar antimicrobial activities against the Gram-positive bacteria S.aureus 502A and L.monocytogenes, the Gram-negative bacteria S.typhimurium and E.coli ML35, and the fungi C.albicans 16820 and C.neoformans 271A.</text>
</comment>
<comment type="subunit">
    <text evidence="3 6">RTD-1 is a cyclic heterodimer composed of subunits A and B; disulfide-linked (PubMed:23148585). RTD-3 is a cyclic homodimer composed of two subunits A; disulfide-linked.</text>
</comment>
<comment type="tissue specificity">
    <text evidence="3">RTD-1 is expressed in bone marrow. Detected in promyelocytes, myelocytes and mature neutrophils and monocytes.</text>
</comment>
<comment type="developmental stage">
    <text evidence="3">RTD-1 expression begins early during granulocyte myelopoiesis.</text>
</comment>
<comment type="PTM">
    <text>Forms a cyclic peptide with subunit A (RTD-3) or with subunit B (RTD-1). An additional intersubunit disulfide bond is formed.</text>
</comment>
<comment type="mass spectrometry" mass="2083.0" method="MALDI" evidence="5">
    <text>RTD-1, heterodimer, cyclized and oxidized.</text>
</comment>
<comment type="mass spectrometry" mass="2076.0" method="MALDI" evidence="5">
    <text>RTD-3, homodimer, cyclized and oxidized.</text>
</comment>
<comment type="mass spectrometry" mass="2087.7" method="MALDI" evidence="4">
    <text>RTD-1, heterodimer and reduced.</text>
</comment>
<comment type="mass spectrometry" mass="2080.48" method="MALDI" evidence="4">
    <text>RTD-3, homodimer and reduced.</text>
</comment>
<comment type="miscellaneous">
    <text>RTD-1 is 10-fold more present in cells than RTD-3.</text>
</comment>
<comment type="similarity">
    <text evidence="7">Belongs to the alpha-defensin family. Theta subfamily.</text>
</comment>
<proteinExistence type="evidence at protein level"/>
<sequence length="76" mass="8242">MRTFALLTAMLLLVALHAQAEARQARADEAAAQQQPGTDDQGMAHSFTWPENAALPLSESAKGLRCICTRGFCRLL</sequence>
<protein>
    <recommendedName>
        <fullName>Rhesus theta defensin-1/3 subunit A</fullName>
        <shortName>RTD-1 subunit A</shortName>
        <shortName>RTD-1a</shortName>
    </recommendedName>
    <alternativeName>
        <fullName>Demidefensin-2</fullName>
    </alternativeName>
    <alternativeName>
        <fullName>RTD-3</fullName>
    </alternativeName>
</protein>
<accession>P82270</accession>
<accession>Q9TU01</accession>
<keyword id="KW-0002">3D-structure</keyword>
<keyword id="KW-0044">Antibiotic</keyword>
<keyword id="KW-0929">Antimicrobial</keyword>
<keyword id="KW-0211">Defensin</keyword>
<keyword id="KW-0903">Direct protein sequencing</keyword>
<keyword id="KW-1015">Disulfide bond</keyword>
<keyword id="KW-0295">Fungicide</keyword>
<keyword id="KW-1185">Reference proteome</keyword>
<keyword id="KW-0732">Signal</keyword>
<dbReference type="EMBL" id="AF191100">
    <property type="protein sequence ID" value="AAF04389.1"/>
    <property type="molecule type" value="mRNA"/>
</dbReference>
<dbReference type="EMBL" id="AF191102">
    <property type="protein sequence ID" value="AAF04391.1"/>
    <property type="molecule type" value="Genomic_DNA"/>
</dbReference>
<dbReference type="EMBL" id="AF184157">
    <property type="protein sequence ID" value="AAF07924.1"/>
    <property type="molecule type" value="mRNA"/>
</dbReference>
<dbReference type="PIR" id="A59089">
    <property type="entry name" value="A59089"/>
</dbReference>
<dbReference type="RefSeq" id="NP_001027989.1">
    <property type="nucleotide sequence ID" value="NM_001032817.2"/>
</dbReference>
<dbReference type="PDB" id="2LYF">
    <property type="method" value="NMR"/>
    <property type="chains" value="A=65-73"/>
</dbReference>
<dbReference type="PDBsum" id="2LYF"/>
<dbReference type="STRING" id="9544.ENSMMUP00000061272"/>
<dbReference type="TCDB" id="1.C.19.1.6">
    <property type="family name" value="the defensin (defensin) family"/>
</dbReference>
<dbReference type="PaxDb" id="9544-ENSMMUP00000023400"/>
<dbReference type="GeneID" id="574122"/>
<dbReference type="KEGG" id="mcc:574122"/>
<dbReference type="CTD" id="574122"/>
<dbReference type="eggNOG" id="ENOG502TEA8">
    <property type="taxonomic scope" value="Eukaryota"/>
</dbReference>
<dbReference type="HOGENOM" id="CLU_160803_2_0_1"/>
<dbReference type="InParanoid" id="P82270"/>
<dbReference type="OrthoDB" id="9539570at2759"/>
<dbReference type="Proteomes" id="UP000006718">
    <property type="component" value="Unassembled WGS sequence"/>
</dbReference>
<dbReference type="GO" id="GO:0005615">
    <property type="term" value="C:extracellular space"/>
    <property type="evidence" value="ECO:0000318"/>
    <property type="project" value="GO_Central"/>
</dbReference>
<dbReference type="GO" id="GO:0019731">
    <property type="term" value="P:antibacterial humoral response"/>
    <property type="evidence" value="ECO:0000318"/>
    <property type="project" value="GO_Central"/>
</dbReference>
<dbReference type="GO" id="GO:0061844">
    <property type="term" value="P:antimicrobial humoral immune response mediated by antimicrobial peptide"/>
    <property type="evidence" value="ECO:0000318"/>
    <property type="project" value="GO_Central"/>
</dbReference>
<dbReference type="GO" id="GO:0071222">
    <property type="term" value="P:cellular response to lipopolysaccharide"/>
    <property type="evidence" value="ECO:0000318"/>
    <property type="project" value="GO_Central"/>
</dbReference>
<dbReference type="GO" id="GO:0050832">
    <property type="term" value="P:defense response to fungus"/>
    <property type="evidence" value="ECO:0000314"/>
    <property type="project" value="UniProtKB"/>
</dbReference>
<dbReference type="GO" id="GO:0050829">
    <property type="term" value="P:defense response to Gram-negative bacterium"/>
    <property type="evidence" value="ECO:0000314"/>
    <property type="project" value="UniProtKB"/>
</dbReference>
<dbReference type="GO" id="GO:0050830">
    <property type="term" value="P:defense response to Gram-positive bacterium"/>
    <property type="evidence" value="ECO:0000314"/>
    <property type="project" value="UniProtKB"/>
</dbReference>
<dbReference type="GO" id="GO:0051673">
    <property type="term" value="P:disruption of plasma membrane integrity in another organism"/>
    <property type="evidence" value="ECO:0000318"/>
    <property type="project" value="GO_Central"/>
</dbReference>
<dbReference type="GO" id="GO:0002227">
    <property type="term" value="P:innate immune response in mucosa"/>
    <property type="evidence" value="ECO:0000318"/>
    <property type="project" value="GO_Central"/>
</dbReference>
<dbReference type="GO" id="GO:0031640">
    <property type="term" value="P:killing of cells of another organism"/>
    <property type="evidence" value="ECO:0007669"/>
    <property type="project" value="UniProtKB-KW"/>
</dbReference>
<dbReference type="InterPro" id="IPR016327">
    <property type="entry name" value="Alpha-defensin"/>
</dbReference>
<dbReference type="InterPro" id="IPR002366">
    <property type="entry name" value="Alpha-defensin_N"/>
</dbReference>
<dbReference type="PANTHER" id="PTHR11876">
    <property type="entry name" value="ALPHA-DEFENSIN 1"/>
    <property type="match status" value="1"/>
</dbReference>
<dbReference type="PANTHER" id="PTHR11876:SF34">
    <property type="entry name" value="DEMIDEFENSIN-3"/>
    <property type="match status" value="1"/>
</dbReference>
<dbReference type="Pfam" id="PF00879">
    <property type="entry name" value="Defensin_propep"/>
    <property type="match status" value="1"/>
</dbReference>
<dbReference type="PIRSF" id="PIRSF001875">
    <property type="entry name" value="Alpha-defensin"/>
    <property type="match status" value="1"/>
</dbReference>
<dbReference type="SMART" id="SM01418">
    <property type="entry name" value="Defensin_propep"/>
    <property type="match status" value="1"/>
</dbReference>
<evidence type="ECO:0000255" key="1"/>
<evidence type="ECO:0000256" key="2">
    <source>
        <dbReference type="SAM" id="MobiDB-lite"/>
    </source>
</evidence>
<evidence type="ECO:0000269" key="3">
    <source>
    </source>
</evidence>
<evidence type="ECO:0000269" key="4">
    <source>
    </source>
</evidence>
<evidence type="ECO:0000269" key="5">
    <source>
    </source>
</evidence>
<evidence type="ECO:0000269" key="6">
    <source>
    </source>
</evidence>
<evidence type="ECO:0000305" key="7"/>
<name>RTD1A_MACMU</name>
<gene>
    <name type="primary">RTD1A</name>
</gene>
<reference key="1">
    <citation type="journal article" date="1999" name="Science">
        <title>A cyclic antimicrobial peptide produced in primate leukocytes by the ligation of two truncated alpha-defensins.</title>
        <authorList>
            <person name="Tang Y.-Q."/>
            <person name="Yuan J."/>
            <person name="Oesapay G."/>
            <person name="Oesapay K."/>
            <person name="Tran D."/>
            <person name="Miller C.J."/>
            <person name="Ouellette A.J."/>
            <person name="Selsted M.E."/>
        </authorList>
    </citation>
    <scope>NUCLEOTIDE SEQUENCE [GENOMIC DNA / MRNA]</scope>
    <scope>PROTEIN SEQUENCE OF 65-73</scope>
    <scope>SYNTHESIS OF 65-73</scope>
    <scope>TISSUE SPECIFICITY</scope>
    <scope>DEVELOPMENTAL STAGE</scope>
    <scope>DISULFIDE BONDS</scope>
    <source>
        <tissue evidence="3">Bone marrow</tissue>
        <tissue evidence="3">Leukocyte</tissue>
    </source>
</reference>
<reference key="2">
    <citation type="journal article" date="2001" name="J. Leukoc. Biol.">
        <title>Circular minidefensins and posttranslational generation of molecular diversity.</title>
        <authorList>
            <person name="Leonova L."/>
            <person name="Kokryakov V.N."/>
            <person name="Aleshina G."/>
            <person name="Hong T."/>
            <person name="Nguyen T."/>
            <person name="Zhao C."/>
            <person name="Waring A.J."/>
            <person name="Lehrer R.I."/>
        </authorList>
    </citation>
    <scope>NUCLEOTIDE SEQUENCE [MRNA]</scope>
    <scope>SYNTHESIS OF RTD-1 AND RTD-3</scope>
    <scope>MASS SPECTROMETRY</scope>
    <source>
        <tissue>Bone marrow</tissue>
    </source>
</reference>
<reference key="3">
    <citation type="journal article" date="2002" name="J. Biol. Chem.">
        <title>Homodimeric theta-defensins from rhesus macaque leukocytes: isolation, synthesis, antimicrobial activities, and bacterial binding properties of the cyclic peptides.</title>
        <authorList>
            <person name="Tran D."/>
            <person name="Tran P.A."/>
            <person name="Tang Y.-Q."/>
            <person name="Yuan J."/>
            <person name="Cole T."/>
            <person name="Selsted M.E."/>
        </authorList>
    </citation>
    <scope>PROTEIN SEQUENCE OF 65-73</scope>
    <scope>SYNTHESIS OF RTD-3</scope>
    <scope>FUNCTION OF RTD-1 AND RTD-3</scope>
    <scope>MASS SPECTROMETRY</scope>
    <source>
        <tissue>Leukocyte</tissue>
    </source>
</reference>
<reference key="4">
    <citation type="journal article" date="2012" name="Biochemistry">
        <title>Structural characterization of the cyclic cystine ladder motif of theta-defensins.</title>
        <authorList>
            <person name="Conibear A.C."/>
            <person name="Rosengren K.J."/>
            <person name="Harvey P.J."/>
            <person name="Craik D.J."/>
        </authorList>
    </citation>
    <scope>STRUCTURE BY NMR OF 65-73</scope>
    <scope>DISULFIDE BOND</scope>
    <scope>SYNTHESIS OF RTD-1</scope>
    <scope>SUBUNIT</scope>
</reference>